<keyword id="KW-0067">ATP-binding</keyword>
<keyword id="KW-0436">Ligase</keyword>
<keyword id="KW-0460">Magnesium</keyword>
<keyword id="KW-0479">Metal-binding</keyword>
<keyword id="KW-0547">Nucleotide-binding</keyword>
<keyword id="KW-0816">Tricarboxylic acid cycle</keyword>
<proteinExistence type="inferred from homology"/>
<evidence type="ECO:0000255" key="1">
    <source>
        <dbReference type="HAMAP-Rule" id="MF_00558"/>
    </source>
</evidence>
<sequence length="398" mass="42999">MNIHEYQAKRLLHEYGAPIANGVAVYSIEQAEKWAKKLPGPLYVVKSQIHAGGRGKGKFKELDLDSKGGVRLAKSVEEVVANVKEMLGKTLVTKQTGPEGKQVNRLYIEDGADIERELYLSLLVDRAVGRVAFVVSMEGGMDIETVAEETPEKILTLPVDPVQGVTSADCKRLCDALELHDNARKDGEKLFPILYKAFCEKDMSLLEINPLIVMKDGHLRVLDAKISFDNNALFRHPDILELRDLSEEDPKEIEASKHDLAYVALEGTIGCMVNGAGLAMATMDIIKLYGAEPANFLDVGGGASKEKVTAAFKIITADPNVKGILVNIFGGIMRCDVIAEGVVAAVREVGLKVPLVVRLEGTNIEQGKAIISDSGLNVISASDLDDAAQKIIAAVRGA</sequence>
<reference key="1">
    <citation type="journal article" date="2004" name="Proc. Natl. Acad. Sci. U.S.A.">
        <title>The louse-borne human pathogen Bartonella quintana is a genomic derivative of the zoonotic agent Bartonella henselae.</title>
        <authorList>
            <person name="Alsmark U.C.M."/>
            <person name="Frank A.C."/>
            <person name="Karlberg E.O."/>
            <person name="Legault B.-A."/>
            <person name="Ardell D.H."/>
            <person name="Canbaeck B."/>
            <person name="Eriksson A.-S."/>
            <person name="Naeslund A.K."/>
            <person name="Handley S.A."/>
            <person name="Huvet M."/>
            <person name="La Scola B."/>
            <person name="Holmberg M."/>
            <person name="Andersson S.G.E."/>
        </authorList>
    </citation>
    <scope>NUCLEOTIDE SEQUENCE [LARGE SCALE GENOMIC DNA]</scope>
    <source>
        <strain>Toulouse</strain>
    </source>
</reference>
<comment type="function">
    <text evidence="1">Succinyl-CoA synthetase functions in the citric acid cycle (TCA), coupling the hydrolysis of succinyl-CoA to the synthesis of either ATP or GTP and thus represents the only step of substrate-level phosphorylation in the TCA. The beta subunit provides nucleotide specificity of the enzyme and binds the substrate succinate, while the binding sites for coenzyme A and phosphate are found in the alpha subunit.</text>
</comment>
<comment type="catalytic activity">
    <reaction evidence="1">
        <text>succinate + ATP + CoA = succinyl-CoA + ADP + phosphate</text>
        <dbReference type="Rhea" id="RHEA:17661"/>
        <dbReference type="ChEBI" id="CHEBI:30031"/>
        <dbReference type="ChEBI" id="CHEBI:30616"/>
        <dbReference type="ChEBI" id="CHEBI:43474"/>
        <dbReference type="ChEBI" id="CHEBI:57287"/>
        <dbReference type="ChEBI" id="CHEBI:57292"/>
        <dbReference type="ChEBI" id="CHEBI:456216"/>
        <dbReference type="EC" id="6.2.1.5"/>
    </reaction>
    <physiologicalReaction direction="right-to-left" evidence="1">
        <dbReference type="Rhea" id="RHEA:17663"/>
    </physiologicalReaction>
</comment>
<comment type="catalytic activity">
    <reaction evidence="1">
        <text>GTP + succinate + CoA = succinyl-CoA + GDP + phosphate</text>
        <dbReference type="Rhea" id="RHEA:22120"/>
        <dbReference type="ChEBI" id="CHEBI:30031"/>
        <dbReference type="ChEBI" id="CHEBI:37565"/>
        <dbReference type="ChEBI" id="CHEBI:43474"/>
        <dbReference type="ChEBI" id="CHEBI:57287"/>
        <dbReference type="ChEBI" id="CHEBI:57292"/>
        <dbReference type="ChEBI" id="CHEBI:58189"/>
    </reaction>
    <physiologicalReaction direction="right-to-left" evidence="1">
        <dbReference type="Rhea" id="RHEA:22122"/>
    </physiologicalReaction>
</comment>
<comment type="cofactor">
    <cofactor evidence="1">
        <name>Mg(2+)</name>
        <dbReference type="ChEBI" id="CHEBI:18420"/>
    </cofactor>
    <text evidence="1">Binds 1 Mg(2+) ion per subunit.</text>
</comment>
<comment type="pathway">
    <text evidence="1">Carbohydrate metabolism; tricarboxylic acid cycle; succinate from succinyl-CoA (ligase route): step 1/1.</text>
</comment>
<comment type="subunit">
    <text evidence="1">Heterotetramer of two alpha and two beta subunits.</text>
</comment>
<comment type="similarity">
    <text evidence="1">Belongs to the succinate/malate CoA ligase beta subunit family.</text>
</comment>
<dbReference type="EC" id="6.2.1.5" evidence="1"/>
<dbReference type="EMBL" id="BX897700">
    <property type="protein sequence ID" value="CAF26802.1"/>
    <property type="molecule type" value="Genomic_DNA"/>
</dbReference>
<dbReference type="RefSeq" id="WP_011179956.1">
    <property type="nucleotide sequence ID" value="NC_005955.1"/>
</dbReference>
<dbReference type="SMR" id="Q6FYD1"/>
<dbReference type="KEGG" id="bqu:BQ13440"/>
<dbReference type="eggNOG" id="COG0045">
    <property type="taxonomic scope" value="Bacteria"/>
</dbReference>
<dbReference type="HOGENOM" id="CLU_037430_0_2_5"/>
<dbReference type="OrthoDB" id="9802602at2"/>
<dbReference type="UniPathway" id="UPA00223">
    <property type="reaction ID" value="UER00999"/>
</dbReference>
<dbReference type="Proteomes" id="UP000000597">
    <property type="component" value="Chromosome"/>
</dbReference>
<dbReference type="GO" id="GO:0005829">
    <property type="term" value="C:cytosol"/>
    <property type="evidence" value="ECO:0007669"/>
    <property type="project" value="TreeGrafter"/>
</dbReference>
<dbReference type="GO" id="GO:0042709">
    <property type="term" value="C:succinate-CoA ligase complex"/>
    <property type="evidence" value="ECO:0007669"/>
    <property type="project" value="TreeGrafter"/>
</dbReference>
<dbReference type="GO" id="GO:0005524">
    <property type="term" value="F:ATP binding"/>
    <property type="evidence" value="ECO:0007669"/>
    <property type="project" value="UniProtKB-UniRule"/>
</dbReference>
<dbReference type="GO" id="GO:0000287">
    <property type="term" value="F:magnesium ion binding"/>
    <property type="evidence" value="ECO:0007669"/>
    <property type="project" value="UniProtKB-UniRule"/>
</dbReference>
<dbReference type="GO" id="GO:0004775">
    <property type="term" value="F:succinate-CoA ligase (ADP-forming) activity"/>
    <property type="evidence" value="ECO:0007669"/>
    <property type="project" value="UniProtKB-UniRule"/>
</dbReference>
<dbReference type="GO" id="GO:0004776">
    <property type="term" value="F:succinate-CoA ligase (GDP-forming) activity"/>
    <property type="evidence" value="ECO:0007669"/>
    <property type="project" value="RHEA"/>
</dbReference>
<dbReference type="GO" id="GO:0006104">
    <property type="term" value="P:succinyl-CoA metabolic process"/>
    <property type="evidence" value="ECO:0007669"/>
    <property type="project" value="TreeGrafter"/>
</dbReference>
<dbReference type="GO" id="GO:0006099">
    <property type="term" value="P:tricarboxylic acid cycle"/>
    <property type="evidence" value="ECO:0007669"/>
    <property type="project" value="UniProtKB-UniRule"/>
</dbReference>
<dbReference type="FunFam" id="3.30.1490.20:FF:000002">
    <property type="entry name" value="Succinate--CoA ligase [ADP-forming] subunit beta"/>
    <property type="match status" value="1"/>
</dbReference>
<dbReference type="FunFam" id="3.30.470.20:FF:000002">
    <property type="entry name" value="Succinate--CoA ligase [ADP-forming] subunit beta"/>
    <property type="match status" value="1"/>
</dbReference>
<dbReference type="FunFam" id="3.40.50.261:FF:000001">
    <property type="entry name" value="Succinate--CoA ligase [ADP-forming] subunit beta"/>
    <property type="match status" value="1"/>
</dbReference>
<dbReference type="Gene3D" id="3.30.1490.20">
    <property type="entry name" value="ATP-grasp fold, A domain"/>
    <property type="match status" value="1"/>
</dbReference>
<dbReference type="Gene3D" id="3.30.470.20">
    <property type="entry name" value="ATP-grasp fold, B domain"/>
    <property type="match status" value="1"/>
</dbReference>
<dbReference type="Gene3D" id="3.40.50.261">
    <property type="entry name" value="Succinyl-CoA synthetase domains"/>
    <property type="match status" value="1"/>
</dbReference>
<dbReference type="HAMAP" id="MF_00558">
    <property type="entry name" value="Succ_CoA_beta"/>
    <property type="match status" value="1"/>
</dbReference>
<dbReference type="InterPro" id="IPR011761">
    <property type="entry name" value="ATP-grasp"/>
</dbReference>
<dbReference type="InterPro" id="IPR013650">
    <property type="entry name" value="ATP-grasp_succ-CoA_synth-type"/>
</dbReference>
<dbReference type="InterPro" id="IPR013815">
    <property type="entry name" value="ATP_grasp_subdomain_1"/>
</dbReference>
<dbReference type="InterPro" id="IPR017866">
    <property type="entry name" value="Succ-CoA_synthase_bsu_CS"/>
</dbReference>
<dbReference type="InterPro" id="IPR005811">
    <property type="entry name" value="SUCC_ACL_C"/>
</dbReference>
<dbReference type="InterPro" id="IPR005809">
    <property type="entry name" value="Succ_CoA_ligase-like_bsu"/>
</dbReference>
<dbReference type="InterPro" id="IPR016102">
    <property type="entry name" value="Succinyl-CoA_synth-like"/>
</dbReference>
<dbReference type="NCBIfam" id="NF001913">
    <property type="entry name" value="PRK00696.1"/>
    <property type="match status" value="1"/>
</dbReference>
<dbReference type="NCBIfam" id="TIGR01016">
    <property type="entry name" value="sucCoAbeta"/>
    <property type="match status" value="1"/>
</dbReference>
<dbReference type="PANTHER" id="PTHR11815:SF10">
    <property type="entry name" value="SUCCINATE--COA LIGASE [GDP-FORMING] SUBUNIT BETA, MITOCHONDRIAL"/>
    <property type="match status" value="1"/>
</dbReference>
<dbReference type="PANTHER" id="PTHR11815">
    <property type="entry name" value="SUCCINYL-COA SYNTHETASE BETA CHAIN"/>
    <property type="match status" value="1"/>
</dbReference>
<dbReference type="Pfam" id="PF08442">
    <property type="entry name" value="ATP-grasp_2"/>
    <property type="match status" value="1"/>
</dbReference>
<dbReference type="Pfam" id="PF00549">
    <property type="entry name" value="Ligase_CoA"/>
    <property type="match status" value="1"/>
</dbReference>
<dbReference type="PIRSF" id="PIRSF001554">
    <property type="entry name" value="SucCS_beta"/>
    <property type="match status" value="1"/>
</dbReference>
<dbReference type="SUPFAM" id="SSF56059">
    <property type="entry name" value="Glutathione synthetase ATP-binding domain-like"/>
    <property type="match status" value="1"/>
</dbReference>
<dbReference type="SUPFAM" id="SSF52210">
    <property type="entry name" value="Succinyl-CoA synthetase domains"/>
    <property type="match status" value="1"/>
</dbReference>
<dbReference type="PROSITE" id="PS50975">
    <property type="entry name" value="ATP_GRASP"/>
    <property type="match status" value="1"/>
</dbReference>
<dbReference type="PROSITE" id="PS01217">
    <property type="entry name" value="SUCCINYL_COA_LIG_3"/>
    <property type="match status" value="1"/>
</dbReference>
<feature type="chain" id="PRO_1000082020" description="Succinate--CoA ligase [ADP-forming] subunit beta">
    <location>
        <begin position="1"/>
        <end position="398"/>
    </location>
</feature>
<feature type="domain" description="ATP-grasp" evidence="1">
    <location>
        <begin position="9"/>
        <end position="254"/>
    </location>
</feature>
<feature type="binding site" evidence="1">
    <location>
        <position position="46"/>
    </location>
    <ligand>
        <name>ATP</name>
        <dbReference type="ChEBI" id="CHEBI:30616"/>
    </ligand>
</feature>
<feature type="binding site" evidence="1">
    <location>
        <begin position="53"/>
        <end position="55"/>
    </location>
    <ligand>
        <name>ATP</name>
        <dbReference type="ChEBI" id="CHEBI:30616"/>
    </ligand>
</feature>
<feature type="binding site" evidence="1">
    <location>
        <position position="109"/>
    </location>
    <ligand>
        <name>ATP</name>
        <dbReference type="ChEBI" id="CHEBI:30616"/>
    </ligand>
</feature>
<feature type="binding site" evidence="1">
    <location>
        <position position="112"/>
    </location>
    <ligand>
        <name>ATP</name>
        <dbReference type="ChEBI" id="CHEBI:30616"/>
    </ligand>
</feature>
<feature type="binding site" evidence="1">
    <location>
        <position position="117"/>
    </location>
    <ligand>
        <name>ATP</name>
        <dbReference type="ChEBI" id="CHEBI:30616"/>
    </ligand>
</feature>
<feature type="binding site" evidence="1">
    <location>
        <position position="209"/>
    </location>
    <ligand>
        <name>Mg(2+)</name>
        <dbReference type="ChEBI" id="CHEBI:18420"/>
    </ligand>
</feature>
<feature type="binding site" evidence="1">
    <location>
        <position position="223"/>
    </location>
    <ligand>
        <name>Mg(2+)</name>
        <dbReference type="ChEBI" id="CHEBI:18420"/>
    </ligand>
</feature>
<feature type="binding site" evidence="1">
    <location>
        <position position="274"/>
    </location>
    <ligand>
        <name>substrate</name>
        <note>ligand shared with subunit alpha</note>
    </ligand>
</feature>
<feature type="binding site" evidence="1">
    <location>
        <begin position="331"/>
        <end position="333"/>
    </location>
    <ligand>
        <name>substrate</name>
        <note>ligand shared with subunit alpha</note>
    </ligand>
</feature>
<accession>Q6FYD1</accession>
<protein>
    <recommendedName>
        <fullName evidence="1">Succinate--CoA ligase [ADP-forming] subunit beta</fullName>
        <ecNumber evidence="1">6.2.1.5</ecNumber>
    </recommendedName>
    <alternativeName>
        <fullName evidence="1">Succinyl-CoA synthetase subunit beta</fullName>
        <shortName evidence="1">SCS-beta</shortName>
    </alternativeName>
</protein>
<gene>
    <name evidence="1" type="primary">sucC</name>
    <name type="ordered locus">BQ13440</name>
</gene>
<organism>
    <name type="scientific">Bartonella quintana (strain Toulouse)</name>
    <name type="common">Rochalimaea quintana</name>
    <dbReference type="NCBI Taxonomy" id="283165"/>
    <lineage>
        <taxon>Bacteria</taxon>
        <taxon>Pseudomonadati</taxon>
        <taxon>Pseudomonadota</taxon>
        <taxon>Alphaproteobacteria</taxon>
        <taxon>Hyphomicrobiales</taxon>
        <taxon>Bartonellaceae</taxon>
        <taxon>Bartonella</taxon>
    </lineage>
</organism>
<name>SUCC_BARQU</name>